<feature type="chain" id="PRO_0000121188" description="Ras-related protein Rab-15">
    <location>
        <begin position="1"/>
        <end position="212"/>
    </location>
</feature>
<feature type="region of interest" description="Disordered" evidence="5">
    <location>
        <begin position="193"/>
        <end position="212"/>
    </location>
</feature>
<feature type="short sequence motif" description="Switch 1" evidence="4">
    <location>
        <begin position="31"/>
        <end position="45"/>
    </location>
</feature>
<feature type="short sequence motif" description="Switch 2" evidence="4">
    <location>
        <begin position="63"/>
        <end position="80"/>
    </location>
</feature>
<feature type="binding site" evidence="3">
    <location>
        <position position="17"/>
    </location>
    <ligand>
        <name>GTP</name>
        <dbReference type="ChEBI" id="CHEBI:37565"/>
    </ligand>
</feature>
<feature type="binding site" evidence="3">
    <location>
        <position position="18"/>
    </location>
    <ligand>
        <name>GTP</name>
        <dbReference type="ChEBI" id="CHEBI:37565"/>
    </ligand>
</feature>
<feature type="binding site" evidence="3">
    <location>
        <position position="19"/>
    </location>
    <ligand>
        <name>GTP</name>
        <dbReference type="ChEBI" id="CHEBI:37565"/>
    </ligand>
</feature>
<feature type="binding site" evidence="3">
    <location>
        <position position="20"/>
    </location>
    <ligand>
        <name>GTP</name>
        <dbReference type="ChEBI" id="CHEBI:37565"/>
    </ligand>
</feature>
<feature type="binding site" evidence="3">
    <location>
        <position position="21"/>
    </location>
    <ligand>
        <name>GTP</name>
        <dbReference type="ChEBI" id="CHEBI:37565"/>
    </ligand>
</feature>
<feature type="binding site" evidence="3">
    <location>
        <position position="22"/>
    </location>
    <ligand>
        <name>GTP</name>
        <dbReference type="ChEBI" id="CHEBI:37565"/>
    </ligand>
</feature>
<feature type="binding site" evidence="3">
    <location>
        <position position="22"/>
    </location>
    <ligand>
        <name>Mg(2+)</name>
        <dbReference type="ChEBI" id="CHEBI:18420"/>
    </ligand>
</feature>
<feature type="binding site" evidence="3">
    <location>
        <position position="23"/>
    </location>
    <ligand>
        <name>GTP</name>
        <dbReference type="ChEBI" id="CHEBI:37565"/>
    </ligand>
</feature>
<feature type="binding site" evidence="3">
    <location>
        <position position="35"/>
    </location>
    <ligand>
        <name>GTP</name>
        <dbReference type="ChEBI" id="CHEBI:37565"/>
    </ligand>
</feature>
<feature type="binding site" evidence="3">
    <location>
        <position position="39"/>
    </location>
    <ligand>
        <name>GTP</name>
        <dbReference type="ChEBI" id="CHEBI:37565"/>
    </ligand>
</feature>
<feature type="binding site" evidence="3">
    <location>
        <position position="40"/>
    </location>
    <ligand>
        <name>GTP</name>
        <dbReference type="ChEBI" id="CHEBI:37565"/>
    </ligand>
</feature>
<feature type="binding site" evidence="3">
    <location>
        <position position="40"/>
    </location>
    <ligand>
        <name>Mg(2+)</name>
        <dbReference type="ChEBI" id="CHEBI:18420"/>
    </ligand>
</feature>
<feature type="binding site" evidence="3">
    <location>
        <position position="63"/>
    </location>
    <ligand>
        <name>Mg(2+)</name>
        <dbReference type="ChEBI" id="CHEBI:18420"/>
    </ligand>
</feature>
<feature type="binding site" evidence="3">
    <location>
        <position position="66"/>
    </location>
    <ligand>
        <name>GTP</name>
        <dbReference type="ChEBI" id="CHEBI:37565"/>
    </ligand>
</feature>
<feature type="binding site" evidence="3">
    <location>
        <position position="121"/>
    </location>
    <ligand>
        <name>GTP</name>
        <dbReference type="ChEBI" id="CHEBI:37565"/>
    </ligand>
</feature>
<feature type="binding site" evidence="3">
    <location>
        <position position="122"/>
    </location>
    <ligand>
        <name>GTP</name>
        <dbReference type="ChEBI" id="CHEBI:37565"/>
    </ligand>
</feature>
<feature type="binding site" evidence="3">
    <location>
        <position position="124"/>
    </location>
    <ligand>
        <name>GTP</name>
        <dbReference type="ChEBI" id="CHEBI:37565"/>
    </ligand>
</feature>
<feature type="binding site" evidence="3">
    <location>
        <position position="151"/>
    </location>
    <ligand>
        <name>GTP</name>
        <dbReference type="ChEBI" id="CHEBI:37565"/>
    </ligand>
</feature>
<feature type="binding site" evidence="3">
    <location>
        <position position="152"/>
    </location>
    <ligand>
        <name>GTP</name>
        <dbReference type="ChEBI" id="CHEBI:37565"/>
    </ligand>
</feature>
<feature type="modified residue" description="Cysteine methyl ester" evidence="1">
    <location>
        <position position="212"/>
    </location>
</feature>
<feature type="lipid moiety-binding region" description="S-geranylgeranyl cysteine" evidence="1">
    <location>
        <position position="210"/>
    </location>
</feature>
<feature type="lipid moiety-binding region" description="S-geranylgeranyl cysteine" evidence="1">
    <location>
        <position position="212"/>
    </location>
</feature>
<feature type="splice variant" id="VSP_010420" description="In isoform 2." evidence="9 10 11">
    <original>YAPEGVQKILIGNKADEEQKRQVGREQGQQLAKEYGMDFYETSACTNLNIKESFTRLTELVLQAHRKELEGLRMRASNELALAELEEEEGKPEGPANSSKTCWC</original>
    <variation>VGDATSLPGCGEGASPGKARRGPDGKANASRKLCLPQPWMKTSGTHQKASRRSLLGIRLMRSRNGRWEESKGSSWRRSMAWTSMKQVPAPTSTLKSHSRV</variation>
    <location>
        <begin position="109"/>
        <end position="212"/>
    </location>
</feature>
<protein>
    <recommendedName>
        <fullName>Ras-related protein Rab-15</fullName>
        <ecNumber evidence="3">3.6.5.2</ecNumber>
    </recommendedName>
</protein>
<keyword id="KW-0025">Alternative splicing</keyword>
<keyword id="KW-1003">Cell membrane</keyword>
<keyword id="KW-0342">GTP-binding</keyword>
<keyword id="KW-0378">Hydrolase</keyword>
<keyword id="KW-0449">Lipoprotein</keyword>
<keyword id="KW-0460">Magnesium</keyword>
<keyword id="KW-0472">Membrane</keyword>
<keyword id="KW-0479">Metal-binding</keyword>
<keyword id="KW-0488">Methylation</keyword>
<keyword id="KW-0547">Nucleotide-binding</keyword>
<keyword id="KW-0636">Prenylation</keyword>
<keyword id="KW-0653">Protein transport</keyword>
<keyword id="KW-1267">Proteomics identification</keyword>
<keyword id="KW-1185">Reference proteome</keyword>
<keyword id="KW-0813">Transport</keyword>
<proteinExistence type="evidence at protein level"/>
<dbReference type="EC" id="3.6.5.2" evidence="3"/>
<dbReference type="EMBL" id="AB678452">
    <property type="protein sequence ID" value="BAL14289.1"/>
    <property type="molecule type" value="mRNA"/>
</dbReference>
<dbReference type="EMBL" id="AL139022">
    <property type="status" value="NOT_ANNOTATED_CDS"/>
    <property type="molecule type" value="Genomic_DNA"/>
</dbReference>
<dbReference type="EMBL" id="CH471061">
    <property type="protein sequence ID" value="EAW80893.1"/>
    <property type="molecule type" value="Genomic_DNA"/>
</dbReference>
<dbReference type="EMBL" id="BC040679">
    <property type="protein sequence ID" value="AAH40679.2"/>
    <property type="molecule type" value="mRNA"/>
</dbReference>
<dbReference type="EMBL" id="BX248046">
    <property type="protein sequence ID" value="CAD62353.1"/>
    <property type="molecule type" value="mRNA"/>
</dbReference>
<dbReference type="CCDS" id="CCDS76691.1">
    <molecule id="P59190-1"/>
</dbReference>
<dbReference type="CCDS" id="CCDS9768.1">
    <molecule id="P59190-2"/>
</dbReference>
<dbReference type="RefSeq" id="NP_001295083.1">
    <molecule id="P59190-1"/>
    <property type="nucleotide sequence ID" value="NM_001308154.2"/>
</dbReference>
<dbReference type="RefSeq" id="NP_941959.1">
    <molecule id="P59190-2"/>
    <property type="nucleotide sequence ID" value="NM_198686.3"/>
</dbReference>
<dbReference type="SMR" id="P59190"/>
<dbReference type="BioGRID" id="132005">
    <property type="interactions" value="36"/>
</dbReference>
<dbReference type="FunCoup" id="P59190">
    <property type="interactions" value="365"/>
</dbReference>
<dbReference type="IntAct" id="P59190">
    <property type="interactions" value="23"/>
</dbReference>
<dbReference type="MINT" id="P59190"/>
<dbReference type="STRING" id="9606.ENSP00000434103"/>
<dbReference type="iPTMnet" id="P59190"/>
<dbReference type="PhosphoSitePlus" id="P59190"/>
<dbReference type="SwissPalm" id="P59190"/>
<dbReference type="BioMuta" id="RAB15"/>
<dbReference type="DMDM" id="27734452"/>
<dbReference type="jPOST" id="P59190"/>
<dbReference type="MassIVE" id="P59190"/>
<dbReference type="PaxDb" id="9606-ENSP00000267512"/>
<dbReference type="PeptideAtlas" id="P59190"/>
<dbReference type="ProteomicsDB" id="57135">
    <molecule id="P59190-1"/>
</dbReference>
<dbReference type="ProteomicsDB" id="57136">
    <molecule id="P59190-2"/>
</dbReference>
<dbReference type="Pumba" id="P59190"/>
<dbReference type="Antibodypedia" id="24725">
    <property type="antibodies" value="117 antibodies from 25 providers"/>
</dbReference>
<dbReference type="DNASU" id="376267"/>
<dbReference type="Ensembl" id="ENST00000267512.9">
    <molecule id="P59190-2"/>
    <property type="protein sequence ID" value="ENSP00000267512.5"/>
    <property type="gene ID" value="ENSG00000139998.16"/>
</dbReference>
<dbReference type="Ensembl" id="ENST00000533601.7">
    <molecule id="P59190-1"/>
    <property type="protein sequence ID" value="ENSP00000434103.3"/>
    <property type="gene ID" value="ENSG00000139998.16"/>
</dbReference>
<dbReference type="GeneID" id="376267"/>
<dbReference type="KEGG" id="hsa:376267"/>
<dbReference type="MANE-Select" id="ENST00000533601.7">
    <property type="protein sequence ID" value="ENSP00000434103.3"/>
    <property type="RefSeq nucleotide sequence ID" value="NM_001308154.2"/>
    <property type="RefSeq protein sequence ID" value="NP_001295083.1"/>
</dbReference>
<dbReference type="UCSC" id="uc001xhz.2">
    <molecule id="P59190-1"/>
    <property type="organism name" value="human"/>
</dbReference>
<dbReference type="AGR" id="HGNC:20150"/>
<dbReference type="CTD" id="376267"/>
<dbReference type="DisGeNET" id="376267"/>
<dbReference type="GeneCards" id="RAB15"/>
<dbReference type="HGNC" id="HGNC:20150">
    <property type="gene designation" value="RAB15"/>
</dbReference>
<dbReference type="HPA" id="ENSG00000139998">
    <property type="expression patterns" value="Tissue enhanced (brain)"/>
</dbReference>
<dbReference type="MIM" id="619547">
    <property type="type" value="gene"/>
</dbReference>
<dbReference type="neXtProt" id="NX_P59190"/>
<dbReference type="OpenTargets" id="ENSG00000139998"/>
<dbReference type="PharmGKB" id="PA134901572"/>
<dbReference type="VEuPathDB" id="HostDB:ENSG00000139998"/>
<dbReference type="GeneTree" id="ENSGT00940000157848"/>
<dbReference type="HOGENOM" id="CLU_041217_20_0_1"/>
<dbReference type="InParanoid" id="P59190"/>
<dbReference type="OrthoDB" id="9989112at2759"/>
<dbReference type="PAN-GO" id="P59190">
    <property type="GO annotations" value="11 GO annotations based on evolutionary models"/>
</dbReference>
<dbReference type="PhylomeDB" id="P59190"/>
<dbReference type="TreeFam" id="TF314097"/>
<dbReference type="PathwayCommons" id="P59190"/>
<dbReference type="Reactome" id="R-HSA-8873719">
    <property type="pathway name" value="RAB geranylgeranylation"/>
</dbReference>
<dbReference type="SignaLink" id="P59190"/>
<dbReference type="BioGRID-ORCS" id="376267">
    <property type="hits" value="10 hits in 1147 CRISPR screens"/>
</dbReference>
<dbReference type="CD-CODE" id="FB4E32DD">
    <property type="entry name" value="Presynaptic clusters and postsynaptic densities"/>
</dbReference>
<dbReference type="GeneWiki" id="RAB15"/>
<dbReference type="GenomeRNAi" id="376267"/>
<dbReference type="Pharos" id="P59190">
    <property type="development level" value="Tbio"/>
</dbReference>
<dbReference type="PRO" id="PR:P59190"/>
<dbReference type="Proteomes" id="UP000005640">
    <property type="component" value="Chromosome 14"/>
</dbReference>
<dbReference type="RNAct" id="P59190">
    <property type="molecule type" value="protein"/>
</dbReference>
<dbReference type="Bgee" id="ENSG00000139998">
    <property type="expression patterns" value="Expressed in right hemisphere of cerebellum and 175 other cell types or tissues"/>
</dbReference>
<dbReference type="ExpressionAtlas" id="P59190">
    <property type="expression patterns" value="baseline and differential"/>
</dbReference>
<dbReference type="GO" id="GO:0005929">
    <property type="term" value="C:cilium"/>
    <property type="evidence" value="ECO:0000314"/>
    <property type="project" value="UniProtKB"/>
</dbReference>
<dbReference type="GO" id="GO:0005737">
    <property type="term" value="C:cytoplasm"/>
    <property type="evidence" value="ECO:0000314"/>
    <property type="project" value="UniProtKB"/>
</dbReference>
<dbReference type="GO" id="GO:0010008">
    <property type="term" value="C:endosome membrane"/>
    <property type="evidence" value="ECO:0000314"/>
    <property type="project" value="UniProtKB"/>
</dbReference>
<dbReference type="GO" id="GO:0070062">
    <property type="term" value="C:extracellular exosome"/>
    <property type="evidence" value="ECO:0007005"/>
    <property type="project" value="UniProtKB"/>
</dbReference>
<dbReference type="GO" id="GO:0048471">
    <property type="term" value="C:perinuclear region of cytoplasm"/>
    <property type="evidence" value="ECO:0000314"/>
    <property type="project" value="UniProtKB"/>
</dbReference>
<dbReference type="GO" id="GO:0005886">
    <property type="term" value="C:plasma membrane"/>
    <property type="evidence" value="ECO:0007669"/>
    <property type="project" value="UniProtKB-SubCell"/>
</dbReference>
<dbReference type="GO" id="GO:0003925">
    <property type="term" value="F:G protein activity"/>
    <property type="evidence" value="ECO:0000314"/>
    <property type="project" value="GO_Central"/>
</dbReference>
<dbReference type="GO" id="GO:0005525">
    <property type="term" value="F:GTP binding"/>
    <property type="evidence" value="ECO:0007669"/>
    <property type="project" value="UniProtKB-KW"/>
</dbReference>
<dbReference type="GO" id="GO:0006887">
    <property type="term" value="P:exocytosis"/>
    <property type="evidence" value="ECO:0000318"/>
    <property type="project" value="GO_Central"/>
</dbReference>
<dbReference type="GO" id="GO:1903307">
    <property type="term" value="P:positive regulation of regulated secretory pathway"/>
    <property type="evidence" value="ECO:0000315"/>
    <property type="project" value="UniProtKB"/>
</dbReference>
<dbReference type="GO" id="GO:0015031">
    <property type="term" value="P:protein transport"/>
    <property type="evidence" value="ECO:0007669"/>
    <property type="project" value="UniProtKB-KW"/>
</dbReference>
<dbReference type="GO" id="GO:0032482">
    <property type="term" value="P:Rab protein signal transduction"/>
    <property type="evidence" value="ECO:0007669"/>
    <property type="project" value="InterPro"/>
</dbReference>
<dbReference type="GO" id="GO:0006898">
    <property type="term" value="P:receptor-mediated endocytosis"/>
    <property type="evidence" value="ECO:0000314"/>
    <property type="project" value="GO_Central"/>
</dbReference>
<dbReference type="CDD" id="cd04117">
    <property type="entry name" value="Rab15"/>
    <property type="match status" value="1"/>
</dbReference>
<dbReference type="FunFam" id="3.40.50.300:FF:000990">
    <property type="entry name" value="ras-related protein Rab-15 isoform X1"/>
    <property type="match status" value="1"/>
</dbReference>
<dbReference type="Gene3D" id="3.40.50.300">
    <property type="entry name" value="P-loop containing nucleotide triphosphate hydrolases"/>
    <property type="match status" value="1"/>
</dbReference>
<dbReference type="InterPro" id="IPR027417">
    <property type="entry name" value="P-loop_NTPase"/>
</dbReference>
<dbReference type="InterPro" id="IPR041826">
    <property type="entry name" value="Rab15"/>
</dbReference>
<dbReference type="InterPro" id="IPR005225">
    <property type="entry name" value="Small_GTP-bd"/>
</dbReference>
<dbReference type="InterPro" id="IPR001806">
    <property type="entry name" value="Small_GTPase"/>
</dbReference>
<dbReference type="InterPro" id="IPR050305">
    <property type="entry name" value="Small_GTPase_Rab"/>
</dbReference>
<dbReference type="NCBIfam" id="TIGR00231">
    <property type="entry name" value="small_GTP"/>
    <property type="match status" value="1"/>
</dbReference>
<dbReference type="PANTHER" id="PTHR47980">
    <property type="entry name" value="LD44762P"/>
    <property type="match status" value="1"/>
</dbReference>
<dbReference type="Pfam" id="PF00071">
    <property type="entry name" value="Ras"/>
    <property type="match status" value="1"/>
</dbReference>
<dbReference type="PRINTS" id="PR00449">
    <property type="entry name" value="RASTRNSFRMNG"/>
</dbReference>
<dbReference type="SMART" id="SM00175">
    <property type="entry name" value="RAB"/>
    <property type="match status" value="1"/>
</dbReference>
<dbReference type="SMART" id="SM00176">
    <property type="entry name" value="RAN"/>
    <property type="match status" value="1"/>
</dbReference>
<dbReference type="SMART" id="SM00173">
    <property type="entry name" value="RAS"/>
    <property type="match status" value="1"/>
</dbReference>
<dbReference type="SMART" id="SM00174">
    <property type="entry name" value="RHO"/>
    <property type="match status" value="1"/>
</dbReference>
<dbReference type="SUPFAM" id="SSF52540">
    <property type="entry name" value="P-loop containing nucleoside triphosphate hydrolases"/>
    <property type="match status" value="1"/>
</dbReference>
<dbReference type="PROSITE" id="PS51419">
    <property type="entry name" value="RAB"/>
    <property type="match status" value="1"/>
</dbReference>
<comment type="function">
    <text evidence="2 3">The small GTPases Rab are key regulators of intracellular membrane trafficking, from the formation of transport vesicles to their fusion with membranes (By similarity). Rabs cycle between an inactive GDP-bound form and an active GTP-bound form that is able to recruit to membranes different sets of downstream effectors directly responsible for vesicle formation, movement, tethering and fusion (By similarity). RAB15 may act in concert with RAB3A in regulating aspects of synaptic vesicle membrane flow within the nerve terminal (By similarity).</text>
</comment>
<comment type="catalytic activity">
    <reaction evidence="3">
        <text>GTP + H2O = GDP + phosphate + H(+)</text>
        <dbReference type="Rhea" id="RHEA:19669"/>
        <dbReference type="ChEBI" id="CHEBI:15377"/>
        <dbReference type="ChEBI" id="CHEBI:15378"/>
        <dbReference type="ChEBI" id="CHEBI:37565"/>
        <dbReference type="ChEBI" id="CHEBI:43474"/>
        <dbReference type="ChEBI" id="CHEBI:58189"/>
        <dbReference type="EC" id="3.6.5.2"/>
    </reaction>
    <physiologicalReaction direction="left-to-right" evidence="3">
        <dbReference type="Rhea" id="RHEA:19670"/>
    </physiologicalReaction>
</comment>
<comment type="cofactor">
    <cofactor evidence="3">
        <name>Mg(2+)</name>
        <dbReference type="ChEBI" id="CHEBI:18420"/>
    </cofactor>
</comment>
<comment type="activity regulation">
    <text evidence="12">Regulated by guanine nucleotide exchange factors (GEFs) which promote the exchange of bound GDP for free GTP. Regulated by GTPase activating proteins (GAPs) which increase the GTP hydrolysis activity (Probable). Inhibited by GDP dissociation inhibitors (GDIs) (Probable).</text>
</comment>
<comment type="subunit">
    <text evidence="6 7 8">The GTP bound form of RAB15 interacts with REP15 (PubMed:16195351, PubMed:35871249). Interacts (GTP-bound form) with MICAL1, MICAL3, MICALCL, EHBP1 and EHBP1L1 (PubMed:27552051).</text>
</comment>
<comment type="subcellular location">
    <subcellularLocation>
        <location evidence="12">Cell membrane</location>
        <topology evidence="12">Lipid-anchor</topology>
        <orientation evidence="12">Cytoplasmic side</orientation>
    </subcellularLocation>
</comment>
<comment type="alternative products">
    <event type="alternative splicing"/>
    <isoform>
        <id>P59190-1</id>
        <name>1</name>
        <sequence type="displayed"/>
    </isoform>
    <isoform>
        <id>P59190-2</id>
        <name>2</name>
        <sequence type="described" ref="VSP_010420"/>
    </isoform>
</comment>
<comment type="domain">
    <text evidence="4">Switch 1, switch 2 and the interswitch regions are characteristic of Rab GTPases and mediate the interactions with Rab downstream effectors. The switch regions undergo conformational changes upon nucleotide binding which drives interaction with specific sets of effector proteins, with most effectors only binding to GTP-bound Rab.</text>
</comment>
<comment type="similarity">
    <text evidence="12">Belongs to the small GTPase superfamily. Rab family.</text>
</comment>
<name>RAB15_HUMAN</name>
<sequence length="212" mass="24391">MAKQYDVLFRLLLIGDSGVGKTCLLCRFTDNEFHSSHISTIGVDFKMKTIEVDGIKVRIQIWDTAGQERYQTITKQYYRRAQGIFLVYDISSERSYQHIMKWVSDVDEYAPEGVQKILIGNKADEEQKRQVGREQGQQLAKEYGMDFYETSACTNLNIKESFTRLTELVLQAHRKELEGLRMRASNELALAELEEEEGKPEGPANSSKTCWC</sequence>
<evidence type="ECO:0000250" key="1"/>
<evidence type="ECO:0000250" key="2">
    <source>
        <dbReference type="UniProtKB" id="P35289"/>
    </source>
</evidence>
<evidence type="ECO:0000250" key="3">
    <source>
        <dbReference type="UniProtKB" id="P61026"/>
    </source>
</evidence>
<evidence type="ECO:0000250" key="4">
    <source>
        <dbReference type="UniProtKB" id="P62820"/>
    </source>
</evidence>
<evidence type="ECO:0000256" key="5">
    <source>
        <dbReference type="SAM" id="MobiDB-lite"/>
    </source>
</evidence>
<evidence type="ECO:0000269" key="6">
    <source>
    </source>
</evidence>
<evidence type="ECO:0000269" key="7">
    <source>
    </source>
</evidence>
<evidence type="ECO:0000269" key="8">
    <source>
    </source>
</evidence>
<evidence type="ECO:0000303" key="9">
    <source>
    </source>
</evidence>
<evidence type="ECO:0000303" key="10">
    <source ref="1"/>
</evidence>
<evidence type="ECO:0000303" key="11">
    <source ref="5"/>
</evidence>
<evidence type="ECO:0000305" key="12"/>
<evidence type="ECO:0000312" key="13">
    <source>
        <dbReference type="HGNC" id="HGNC:20150"/>
    </source>
</evidence>
<reference key="1">
    <citation type="submission" date="2011-10" db="EMBL/GenBank/DDBJ databases">
        <title>Aberrant Rab15 expression.</title>
        <authorList>
            <person name="Pham T."/>
            <person name="Hartoma T."/>
            <person name="Nishimura N."/>
        </authorList>
    </citation>
    <scope>NUCLEOTIDE SEQUENCE [MRNA] (ISOFORM 2)</scope>
</reference>
<reference key="2">
    <citation type="journal article" date="2003" name="Nature">
        <title>The DNA sequence and analysis of human chromosome 14.</title>
        <authorList>
            <person name="Heilig R."/>
            <person name="Eckenberg R."/>
            <person name="Petit J.-L."/>
            <person name="Fonknechten N."/>
            <person name="Da Silva C."/>
            <person name="Cattolico L."/>
            <person name="Levy M."/>
            <person name="Barbe V."/>
            <person name="De Berardinis V."/>
            <person name="Ureta-Vidal A."/>
            <person name="Pelletier E."/>
            <person name="Vico V."/>
            <person name="Anthouard V."/>
            <person name="Rowen L."/>
            <person name="Madan A."/>
            <person name="Qin S."/>
            <person name="Sun H."/>
            <person name="Du H."/>
            <person name="Pepin K."/>
            <person name="Artiguenave F."/>
            <person name="Robert C."/>
            <person name="Cruaud C."/>
            <person name="Bruels T."/>
            <person name="Jaillon O."/>
            <person name="Friedlander L."/>
            <person name="Samson G."/>
            <person name="Brottier P."/>
            <person name="Cure S."/>
            <person name="Segurens B."/>
            <person name="Aniere F."/>
            <person name="Samain S."/>
            <person name="Crespeau H."/>
            <person name="Abbasi N."/>
            <person name="Aiach N."/>
            <person name="Boscus D."/>
            <person name="Dickhoff R."/>
            <person name="Dors M."/>
            <person name="Dubois I."/>
            <person name="Friedman C."/>
            <person name="Gouyvenoux M."/>
            <person name="James R."/>
            <person name="Madan A."/>
            <person name="Mairey-Estrada B."/>
            <person name="Mangenot S."/>
            <person name="Martins N."/>
            <person name="Menard M."/>
            <person name="Oztas S."/>
            <person name="Ratcliffe A."/>
            <person name="Shaffer T."/>
            <person name="Trask B."/>
            <person name="Vacherie B."/>
            <person name="Bellemere C."/>
            <person name="Belser C."/>
            <person name="Besnard-Gonnet M."/>
            <person name="Bartol-Mavel D."/>
            <person name="Boutard M."/>
            <person name="Briez-Silla S."/>
            <person name="Combette S."/>
            <person name="Dufosse-Laurent V."/>
            <person name="Ferron C."/>
            <person name="Lechaplais C."/>
            <person name="Louesse C."/>
            <person name="Muselet D."/>
            <person name="Magdelenat G."/>
            <person name="Pateau E."/>
            <person name="Petit E."/>
            <person name="Sirvain-Trukniewicz P."/>
            <person name="Trybou A."/>
            <person name="Vega-Czarny N."/>
            <person name="Bataille E."/>
            <person name="Bluet E."/>
            <person name="Bordelais I."/>
            <person name="Dubois M."/>
            <person name="Dumont C."/>
            <person name="Guerin T."/>
            <person name="Haffray S."/>
            <person name="Hammadi R."/>
            <person name="Muanga J."/>
            <person name="Pellouin V."/>
            <person name="Robert D."/>
            <person name="Wunderle E."/>
            <person name="Gauguet G."/>
            <person name="Roy A."/>
            <person name="Sainte-Marthe L."/>
            <person name="Verdier J."/>
            <person name="Verdier-Discala C."/>
            <person name="Hillier L.W."/>
            <person name="Fulton L."/>
            <person name="McPherson J."/>
            <person name="Matsuda F."/>
            <person name="Wilson R."/>
            <person name="Scarpelli C."/>
            <person name="Gyapay G."/>
            <person name="Wincker P."/>
            <person name="Saurin W."/>
            <person name="Quetier F."/>
            <person name="Waterston R."/>
            <person name="Hood L."/>
            <person name="Weissenbach J."/>
        </authorList>
    </citation>
    <scope>NUCLEOTIDE SEQUENCE [LARGE SCALE GENOMIC DNA]</scope>
</reference>
<reference key="3">
    <citation type="submission" date="2005-07" db="EMBL/GenBank/DDBJ databases">
        <authorList>
            <person name="Mural R.J."/>
            <person name="Istrail S."/>
            <person name="Sutton G."/>
            <person name="Florea L."/>
            <person name="Halpern A.L."/>
            <person name="Mobarry C.M."/>
            <person name="Lippert R."/>
            <person name="Walenz B."/>
            <person name="Shatkay H."/>
            <person name="Dew I."/>
            <person name="Miller J.R."/>
            <person name="Flanigan M.J."/>
            <person name="Edwards N.J."/>
            <person name="Bolanos R."/>
            <person name="Fasulo D."/>
            <person name="Halldorsson B.V."/>
            <person name="Hannenhalli S."/>
            <person name="Turner R."/>
            <person name="Yooseph S."/>
            <person name="Lu F."/>
            <person name="Nusskern D.R."/>
            <person name="Shue B.C."/>
            <person name="Zheng X.H."/>
            <person name="Zhong F."/>
            <person name="Delcher A.L."/>
            <person name="Huson D.H."/>
            <person name="Kravitz S.A."/>
            <person name="Mouchard L."/>
            <person name="Reinert K."/>
            <person name="Remington K.A."/>
            <person name="Clark A.G."/>
            <person name="Waterman M.S."/>
            <person name="Eichler E.E."/>
            <person name="Adams M.D."/>
            <person name="Hunkapiller M.W."/>
            <person name="Myers E.W."/>
            <person name="Venter J.C."/>
        </authorList>
    </citation>
    <scope>NUCLEOTIDE SEQUENCE [LARGE SCALE GENOMIC DNA]</scope>
</reference>
<reference key="4">
    <citation type="journal article" date="2004" name="Genome Res.">
        <title>The status, quality, and expansion of the NIH full-length cDNA project: the Mammalian Gene Collection (MGC).</title>
        <authorList>
            <consortium name="The MGC Project Team"/>
        </authorList>
    </citation>
    <scope>NUCLEOTIDE SEQUENCE [LARGE SCALE MRNA] (ISOFORM 2)</scope>
    <source>
        <tissue>Brain</tissue>
    </source>
</reference>
<reference key="5">
    <citation type="submission" date="2003-02" db="EMBL/GenBank/DDBJ databases">
        <title>Full-length cDNA libraries and normalization.</title>
        <authorList>
            <person name="Li W.B."/>
            <person name="Gruber C."/>
            <person name="Jessee J."/>
            <person name="Polayes D."/>
        </authorList>
    </citation>
    <scope>NUCLEOTIDE SEQUENCE [LARGE SCALE MRNA] OF 42-212 (ISOFORM 2)</scope>
    <source>
        <tissue>Placenta</tissue>
    </source>
</reference>
<reference key="6">
    <citation type="journal article" date="2005" name="Mol. Biol. Cell">
        <title>Rab15 effector protein: a novel protein for receptor recycling from the endocytic recycling compartment.</title>
        <authorList>
            <person name="Strick D.J."/>
            <person name="Elferink L.A."/>
        </authorList>
    </citation>
    <scope>INTERACTION WITH REP15</scope>
</reference>
<reference key="7">
    <citation type="journal article" date="2016" name="Elife">
        <title>bMERB domains are bivalent Rab8 family effectors evolved by gene duplication.</title>
        <authorList>
            <person name="Rai A."/>
            <person name="Oprisko A."/>
            <person name="Campos J."/>
            <person name="Fu Y."/>
            <person name="Friese T."/>
            <person name="Itzen A."/>
            <person name="Goody R.S."/>
            <person name="Gazdag E.M."/>
            <person name="Muller M.P."/>
        </authorList>
    </citation>
    <scope>INTERACTION WITH MICAL1; MICALCL; MICAL3; EHBP1 AND EHBP1L1</scope>
</reference>
<reference key="8">
    <citation type="journal article" date="2022" name="Nat. Commun.">
        <title>Rep15 interacts with several Rab GTPases and has a distinct fold for a Rab effector.</title>
        <authorList>
            <person name="Rai A."/>
            <person name="Singh A.K."/>
            <person name="Bleimling N."/>
            <person name="Posern G."/>
            <person name="Vetter I.R."/>
            <person name="Goody R.S."/>
        </authorList>
    </citation>
    <scope>INTERACTION WITH REP15</scope>
</reference>
<organism>
    <name type="scientific">Homo sapiens</name>
    <name type="common">Human</name>
    <dbReference type="NCBI Taxonomy" id="9606"/>
    <lineage>
        <taxon>Eukaryota</taxon>
        <taxon>Metazoa</taxon>
        <taxon>Chordata</taxon>
        <taxon>Craniata</taxon>
        <taxon>Vertebrata</taxon>
        <taxon>Euteleostomi</taxon>
        <taxon>Mammalia</taxon>
        <taxon>Eutheria</taxon>
        <taxon>Euarchontoglires</taxon>
        <taxon>Primates</taxon>
        <taxon>Haplorrhini</taxon>
        <taxon>Catarrhini</taxon>
        <taxon>Hominidae</taxon>
        <taxon>Homo</taxon>
    </lineage>
</organism>
<gene>
    <name evidence="13" type="primary">RAB15</name>
</gene>
<accession>P59190</accession>
<accession>G5EMR7</accession>
<accession>Q86TX7</accession>
<accession>Q8IW89</accession>